<dbReference type="EC" id="2.4.99.17" evidence="1"/>
<dbReference type="EMBL" id="BA000019">
    <property type="protein sequence ID" value="BAB73497.1"/>
    <property type="molecule type" value="Genomic_DNA"/>
</dbReference>
<dbReference type="PIR" id="AH2030">
    <property type="entry name" value="AH2030"/>
</dbReference>
<dbReference type="RefSeq" id="WP_010995966.1">
    <property type="nucleotide sequence ID" value="NZ_RSCN01000019.1"/>
</dbReference>
<dbReference type="SMR" id="Q8YW18"/>
<dbReference type="STRING" id="103690.gene:10493816"/>
<dbReference type="KEGG" id="ana:alr1798"/>
<dbReference type="eggNOG" id="COG0809">
    <property type="taxonomic scope" value="Bacteria"/>
</dbReference>
<dbReference type="OrthoDB" id="9805933at2"/>
<dbReference type="UniPathway" id="UPA00392"/>
<dbReference type="Proteomes" id="UP000002483">
    <property type="component" value="Chromosome"/>
</dbReference>
<dbReference type="GO" id="GO:0005737">
    <property type="term" value="C:cytoplasm"/>
    <property type="evidence" value="ECO:0007669"/>
    <property type="project" value="UniProtKB-SubCell"/>
</dbReference>
<dbReference type="GO" id="GO:0051075">
    <property type="term" value="F:S-adenosylmethionine:tRNA ribosyltransferase-isomerase activity"/>
    <property type="evidence" value="ECO:0007669"/>
    <property type="project" value="UniProtKB-EC"/>
</dbReference>
<dbReference type="GO" id="GO:0008616">
    <property type="term" value="P:queuosine biosynthetic process"/>
    <property type="evidence" value="ECO:0007669"/>
    <property type="project" value="UniProtKB-UniRule"/>
</dbReference>
<dbReference type="GO" id="GO:0002099">
    <property type="term" value="P:tRNA wobble guanine modification"/>
    <property type="evidence" value="ECO:0007669"/>
    <property type="project" value="TreeGrafter"/>
</dbReference>
<dbReference type="FunFam" id="3.40.1780.10:FF:000001">
    <property type="entry name" value="S-adenosylmethionine:tRNA ribosyltransferase-isomerase"/>
    <property type="match status" value="1"/>
</dbReference>
<dbReference type="Gene3D" id="2.40.10.240">
    <property type="entry name" value="QueA-like"/>
    <property type="match status" value="1"/>
</dbReference>
<dbReference type="Gene3D" id="3.40.1780.10">
    <property type="entry name" value="QueA-like"/>
    <property type="match status" value="1"/>
</dbReference>
<dbReference type="HAMAP" id="MF_00113">
    <property type="entry name" value="QueA"/>
    <property type="match status" value="1"/>
</dbReference>
<dbReference type="InterPro" id="IPR003699">
    <property type="entry name" value="QueA"/>
</dbReference>
<dbReference type="InterPro" id="IPR042118">
    <property type="entry name" value="QueA_dom1"/>
</dbReference>
<dbReference type="InterPro" id="IPR042119">
    <property type="entry name" value="QueA_dom2"/>
</dbReference>
<dbReference type="InterPro" id="IPR036100">
    <property type="entry name" value="QueA_sf"/>
</dbReference>
<dbReference type="NCBIfam" id="NF001140">
    <property type="entry name" value="PRK00147.1"/>
    <property type="match status" value="1"/>
</dbReference>
<dbReference type="NCBIfam" id="TIGR00113">
    <property type="entry name" value="queA"/>
    <property type="match status" value="1"/>
</dbReference>
<dbReference type="PANTHER" id="PTHR30307">
    <property type="entry name" value="S-ADENOSYLMETHIONINE:TRNA RIBOSYLTRANSFERASE-ISOMERASE"/>
    <property type="match status" value="1"/>
</dbReference>
<dbReference type="PANTHER" id="PTHR30307:SF0">
    <property type="entry name" value="S-ADENOSYLMETHIONINE:TRNA RIBOSYLTRANSFERASE-ISOMERASE"/>
    <property type="match status" value="1"/>
</dbReference>
<dbReference type="Pfam" id="PF02547">
    <property type="entry name" value="Queuosine_synth"/>
    <property type="match status" value="1"/>
</dbReference>
<dbReference type="SUPFAM" id="SSF111337">
    <property type="entry name" value="QueA-like"/>
    <property type="match status" value="1"/>
</dbReference>
<organism>
    <name type="scientific">Nostoc sp. (strain PCC 7120 / SAG 25.82 / UTEX 2576)</name>
    <dbReference type="NCBI Taxonomy" id="103690"/>
    <lineage>
        <taxon>Bacteria</taxon>
        <taxon>Bacillati</taxon>
        <taxon>Cyanobacteriota</taxon>
        <taxon>Cyanophyceae</taxon>
        <taxon>Nostocales</taxon>
        <taxon>Nostocaceae</taxon>
        <taxon>Nostoc</taxon>
    </lineage>
</organism>
<proteinExistence type="inferred from homology"/>
<sequence length="397" mass="43789">MKKQILQLNLEQTSSAAAEDTNLDCSLAGYDYVLPPERIAQNPAVPRDSSRLLVVNSQTTGKETPPLHQIFRDLPDILRPGDLLIMNNTKVIPARLYGRKSSGAEVEILLLEERKFNCWLALVKPGKRFKKGTQIIFEGLGMRNLGIENSPQYSVASPHQLTATVLETDKATGGRLLQFDLPEGQSLVQLLDKFGEIPLPPYITTSQAADEQYQTVYAEEPGAIAAPTAGLHFTPELLQKLRDRNINQAFITLHVGVGTFRPVEVEDVATHQMHEEWIEVPAATVAQIKATKAAGGRIIAVGTTVVRALEGAAASGNLQEFCGKTNLFIYPGYKWQVVEGLITNFHLPRSSLLMLVSALIGRERLLNIYQEAIASQYRFYSFGDAMLILPEARGVEQ</sequence>
<comment type="function">
    <text evidence="1">Transfers and isomerizes the ribose moiety from AdoMet to the 7-aminomethyl group of 7-deazaguanine (preQ1-tRNA) to give epoxyqueuosine (oQ-tRNA).</text>
</comment>
<comment type="catalytic activity">
    <reaction evidence="1">
        <text>7-aminomethyl-7-carbaguanosine(34) in tRNA + S-adenosyl-L-methionine = epoxyqueuosine(34) in tRNA + adenine + L-methionine + 2 H(+)</text>
        <dbReference type="Rhea" id="RHEA:32155"/>
        <dbReference type="Rhea" id="RHEA-COMP:10342"/>
        <dbReference type="Rhea" id="RHEA-COMP:18582"/>
        <dbReference type="ChEBI" id="CHEBI:15378"/>
        <dbReference type="ChEBI" id="CHEBI:16708"/>
        <dbReference type="ChEBI" id="CHEBI:57844"/>
        <dbReference type="ChEBI" id="CHEBI:59789"/>
        <dbReference type="ChEBI" id="CHEBI:82833"/>
        <dbReference type="ChEBI" id="CHEBI:194443"/>
        <dbReference type="EC" id="2.4.99.17"/>
    </reaction>
</comment>
<comment type="pathway">
    <text evidence="1">tRNA modification; tRNA-queuosine biosynthesis.</text>
</comment>
<comment type="subunit">
    <text evidence="1">Monomer.</text>
</comment>
<comment type="subcellular location">
    <subcellularLocation>
        <location evidence="1">Cytoplasm</location>
    </subcellularLocation>
</comment>
<comment type="similarity">
    <text evidence="1">Belongs to the QueA family.</text>
</comment>
<reference key="1">
    <citation type="journal article" date="2001" name="DNA Res.">
        <title>Complete genomic sequence of the filamentous nitrogen-fixing cyanobacterium Anabaena sp. strain PCC 7120.</title>
        <authorList>
            <person name="Kaneko T."/>
            <person name="Nakamura Y."/>
            <person name="Wolk C.P."/>
            <person name="Kuritz T."/>
            <person name="Sasamoto S."/>
            <person name="Watanabe A."/>
            <person name="Iriguchi M."/>
            <person name="Ishikawa A."/>
            <person name="Kawashima K."/>
            <person name="Kimura T."/>
            <person name="Kishida Y."/>
            <person name="Kohara M."/>
            <person name="Matsumoto M."/>
            <person name="Matsuno A."/>
            <person name="Muraki A."/>
            <person name="Nakazaki N."/>
            <person name="Shimpo S."/>
            <person name="Sugimoto M."/>
            <person name="Takazawa M."/>
            <person name="Yamada M."/>
            <person name="Yasuda M."/>
            <person name="Tabata S."/>
        </authorList>
    </citation>
    <scope>NUCLEOTIDE SEQUENCE [LARGE SCALE GENOMIC DNA]</scope>
    <source>
        <strain>PCC 7120 / SAG 25.82 / UTEX 2576</strain>
    </source>
</reference>
<gene>
    <name evidence="1" type="primary">queA</name>
    <name type="ordered locus">alr1798</name>
</gene>
<protein>
    <recommendedName>
        <fullName evidence="1">S-adenosylmethionine:tRNA ribosyltransferase-isomerase</fullName>
        <ecNumber evidence="1">2.4.99.17</ecNumber>
    </recommendedName>
    <alternativeName>
        <fullName evidence="1">Queuosine biosynthesis protein QueA</fullName>
    </alternativeName>
</protein>
<evidence type="ECO:0000255" key="1">
    <source>
        <dbReference type="HAMAP-Rule" id="MF_00113"/>
    </source>
</evidence>
<accession>Q8YW18</accession>
<keyword id="KW-0963">Cytoplasm</keyword>
<keyword id="KW-0671">Queuosine biosynthesis</keyword>
<keyword id="KW-1185">Reference proteome</keyword>
<keyword id="KW-0949">S-adenosyl-L-methionine</keyword>
<keyword id="KW-0808">Transferase</keyword>
<feature type="chain" id="PRO_0000165375" description="S-adenosylmethionine:tRNA ribosyltransferase-isomerase">
    <location>
        <begin position="1"/>
        <end position="397"/>
    </location>
</feature>
<name>QUEA_NOSS1</name>